<accession>Q9ERI2</accession>
<reference key="1">
    <citation type="journal article" date="2000" name="Proc. Natl. Acad. Sci. U.S.A.">
        <title>A mutation in Rab27a causes the vesicle transport defects observed in ashen mice.</title>
        <authorList>
            <person name="Wilson S.M."/>
            <person name="Yip R."/>
            <person name="Swing D.A."/>
            <person name="O'Sullivan T.N."/>
            <person name="Zhang Y."/>
            <person name="Novak E.K."/>
            <person name="Swank R.T."/>
            <person name="Russell L.B."/>
            <person name="Copeland N.G."/>
            <person name="Jenkins N.A."/>
        </authorList>
    </citation>
    <scope>NUCLEOTIDE SEQUENCE [MRNA]</scope>
    <source>
        <strain>C3H/HeSn</strain>
    </source>
</reference>
<reference key="2">
    <citation type="submission" date="2000-07" db="EMBL/GenBank/DDBJ databases">
        <authorList>
            <person name="Izumi T."/>
        </authorList>
    </citation>
    <scope>NUCLEOTIDE SEQUENCE [MRNA]</scope>
</reference>
<reference key="3">
    <citation type="journal article" date="2005" name="Science">
        <title>The transcriptional landscape of the mammalian genome.</title>
        <authorList>
            <person name="Carninci P."/>
            <person name="Kasukawa T."/>
            <person name="Katayama S."/>
            <person name="Gough J."/>
            <person name="Frith M.C."/>
            <person name="Maeda N."/>
            <person name="Oyama R."/>
            <person name="Ravasi T."/>
            <person name="Lenhard B."/>
            <person name="Wells C."/>
            <person name="Kodzius R."/>
            <person name="Shimokawa K."/>
            <person name="Bajic V.B."/>
            <person name="Brenner S.E."/>
            <person name="Batalov S."/>
            <person name="Forrest A.R."/>
            <person name="Zavolan M."/>
            <person name="Davis M.J."/>
            <person name="Wilming L.G."/>
            <person name="Aidinis V."/>
            <person name="Allen J.E."/>
            <person name="Ambesi-Impiombato A."/>
            <person name="Apweiler R."/>
            <person name="Aturaliya R.N."/>
            <person name="Bailey T.L."/>
            <person name="Bansal M."/>
            <person name="Baxter L."/>
            <person name="Beisel K.W."/>
            <person name="Bersano T."/>
            <person name="Bono H."/>
            <person name="Chalk A.M."/>
            <person name="Chiu K.P."/>
            <person name="Choudhary V."/>
            <person name="Christoffels A."/>
            <person name="Clutterbuck D.R."/>
            <person name="Crowe M.L."/>
            <person name="Dalla E."/>
            <person name="Dalrymple B.P."/>
            <person name="de Bono B."/>
            <person name="Della Gatta G."/>
            <person name="di Bernardo D."/>
            <person name="Down T."/>
            <person name="Engstrom P."/>
            <person name="Fagiolini M."/>
            <person name="Faulkner G."/>
            <person name="Fletcher C.F."/>
            <person name="Fukushima T."/>
            <person name="Furuno M."/>
            <person name="Futaki S."/>
            <person name="Gariboldi M."/>
            <person name="Georgii-Hemming P."/>
            <person name="Gingeras T.R."/>
            <person name="Gojobori T."/>
            <person name="Green R.E."/>
            <person name="Gustincich S."/>
            <person name="Harbers M."/>
            <person name="Hayashi Y."/>
            <person name="Hensch T.K."/>
            <person name="Hirokawa N."/>
            <person name="Hill D."/>
            <person name="Huminiecki L."/>
            <person name="Iacono M."/>
            <person name="Ikeo K."/>
            <person name="Iwama A."/>
            <person name="Ishikawa T."/>
            <person name="Jakt M."/>
            <person name="Kanapin A."/>
            <person name="Katoh M."/>
            <person name="Kawasawa Y."/>
            <person name="Kelso J."/>
            <person name="Kitamura H."/>
            <person name="Kitano H."/>
            <person name="Kollias G."/>
            <person name="Krishnan S.P."/>
            <person name="Kruger A."/>
            <person name="Kummerfeld S.K."/>
            <person name="Kurochkin I.V."/>
            <person name="Lareau L.F."/>
            <person name="Lazarevic D."/>
            <person name="Lipovich L."/>
            <person name="Liu J."/>
            <person name="Liuni S."/>
            <person name="McWilliam S."/>
            <person name="Madan Babu M."/>
            <person name="Madera M."/>
            <person name="Marchionni L."/>
            <person name="Matsuda H."/>
            <person name="Matsuzawa S."/>
            <person name="Miki H."/>
            <person name="Mignone F."/>
            <person name="Miyake S."/>
            <person name="Morris K."/>
            <person name="Mottagui-Tabar S."/>
            <person name="Mulder N."/>
            <person name="Nakano N."/>
            <person name="Nakauchi H."/>
            <person name="Ng P."/>
            <person name="Nilsson R."/>
            <person name="Nishiguchi S."/>
            <person name="Nishikawa S."/>
            <person name="Nori F."/>
            <person name="Ohara O."/>
            <person name="Okazaki Y."/>
            <person name="Orlando V."/>
            <person name="Pang K.C."/>
            <person name="Pavan W.J."/>
            <person name="Pavesi G."/>
            <person name="Pesole G."/>
            <person name="Petrovsky N."/>
            <person name="Piazza S."/>
            <person name="Reed J."/>
            <person name="Reid J.F."/>
            <person name="Ring B.Z."/>
            <person name="Ringwald M."/>
            <person name="Rost B."/>
            <person name="Ruan Y."/>
            <person name="Salzberg S.L."/>
            <person name="Sandelin A."/>
            <person name="Schneider C."/>
            <person name="Schoenbach C."/>
            <person name="Sekiguchi K."/>
            <person name="Semple C.A."/>
            <person name="Seno S."/>
            <person name="Sessa L."/>
            <person name="Sheng Y."/>
            <person name="Shibata Y."/>
            <person name="Shimada H."/>
            <person name="Shimada K."/>
            <person name="Silva D."/>
            <person name="Sinclair B."/>
            <person name="Sperling S."/>
            <person name="Stupka E."/>
            <person name="Sugiura K."/>
            <person name="Sultana R."/>
            <person name="Takenaka Y."/>
            <person name="Taki K."/>
            <person name="Tammoja K."/>
            <person name="Tan S.L."/>
            <person name="Tang S."/>
            <person name="Taylor M.S."/>
            <person name="Tegner J."/>
            <person name="Teichmann S.A."/>
            <person name="Ueda H.R."/>
            <person name="van Nimwegen E."/>
            <person name="Verardo R."/>
            <person name="Wei C.L."/>
            <person name="Yagi K."/>
            <person name="Yamanishi H."/>
            <person name="Zabarovsky E."/>
            <person name="Zhu S."/>
            <person name="Zimmer A."/>
            <person name="Hide W."/>
            <person name="Bult C."/>
            <person name="Grimmond S.M."/>
            <person name="Teasdale R.D."/>
            <person name="Liu E.T."/>
            <person name="Brusic V."/>
            <person name="Quackenbush J."/>
            <person name="Wahlestedt C."/>
            <person name="Mattick J.S."/>
            <person name="Hume D.A."/>
            <person name="Kai C."/>
            <person name="Sasaki D."/>
            <person name="Tomaru Y."/>
            <person name="Fukuda S."/>
            <person name="Kanamori-Katayama M."/>
            <person name="Suzuki M."/>
            <person name="Aoki J."/>
            <person name="Arakawa T."/>
            <person name="Iida J."/>
            <person name="Imamura K."/>
            <person name="Itoh M."/>
            <person name="Kato T."/>
            <person name="Kawaji H."/>
            <person name="Kawagashira N."/>
            <person name="Kawashima T."/>
            <person name="Kojima M."/>
            <person name="Kondo S."/>
            <person name="Konno H."/>
            <person name="Nakano K."/>
            <person name="Ninomiya N."/>
            <person name="Nishio T."/>
            <person name="Okada M."/>
            <person name="Plessy C."/>
            <person name="Shibata K."/>
            <person name="Shiraki T."/>
            <person name="Suzuki S."/>
            <person name="Tagami M."/>
            <person name="Waki K."/>
            <person name="Watahiki A."/>
            <person name="Okamura-Oho Y."/>
            <person name="Suzuki H."/>
            <person name="Kawai J."/>
            <person name="Hayashizaki Y."/>
        </authorList>
    </citation>
    <scope>NUCLEOTIDE SEQUENCE [LARGE SCALE MRNA]</scope>
    <source>
        <strain>C57BL/6J</strain>
        <tissue>Embryonic stem cell</tissue>
    </source>
</reference>
<reference key="4">
    <citation type="journal article" date="2004" name="Genome Res.">
        <title>The status, quality, and expansion of the NIH full-length cDNA project: the Mammalian Gene Collection (MGC).</title>
        <authorList>
            <consortium name="The MGC Project Team"/>
        </authorList>
    </citation>
    <scope>NUCLEOTIDE SEQUENCE [LARGE SCALE MRNA]</scope>
</reference>
<reference key="5">
    <citation type="journal article" date="2002" name="Biochem. Biophys. Res. Commun.">
        <title>Synaptotagmin-like protein 5: a novel Rab27A effector with C-terminal tandem C2 domains.</title>
        <authorList>
            <person name="Kuroda T.S."/>
            <person name="Fukuda M."/>
            <person name="Ariga H."/>
            <person name="Mikoshiba K."/>
        </authorList>
    </citation>
    <scope>INTERACTION WITH SYTL5</scope>
</reference>
<reference key="6">
    <citation type="journal article" date="2002" name="J. Biol. Chem.">
        <title>The Slp homology domain of synaptotagmin-like proteins 1-4 and Slac2 functions as a novel Rab27A binding domain.</title>
        <authorList>
            <person name="Kuroda T.S."/>
            <person name="Fukuda M."/>
            <person name="Ariga H."/>
            <person name="Mikoshiba K."/>
        </authorList>
    </citation>
    <scope>INTERACTION WITH SYTL1; SYTL2; SYTL3; SYTL4; SLAC2B AND MYRIP</scope>
</reference>
<reference key="7">
    <citation type="journal article" date="2002" name="Nat. Cell Biol.">
        <title>Identification of an organelle receptor for myosin-Va.</title>
        <authorList>
            <person name="Wu X.S."/>
            <person name="Rao K."/>
            <person name="Zhang H."/>
            <person name="Wang F."/>
            <person name="Sellers J.R."/>
            <person name="Matesic L.E."/>
            <person name="Copeland N.G."/>
            <person name="Jenkins N.A."/>
            <person name="Hammer J.A. III"/>
        </authorList>
    </citation>
    <scope>INTERACTION WITH MLPH</scope>
</reference>
<reference key="8">
    <citation type="journal article" date="2003" name="J. Biol. Chem.">
        <title>Distinct Rab binding specificity of Rim1, Rim2, rabphilin, and Noc2. Identification of a critical determinant of Rab3A/Rab27A recognition by Rim2.</title>
        <authorList>
            <person name="Fukuda M."/>
        </authorList>
    </citation>
    <scope>INTERACTION WITH RPH3A AND RPH3AL</scope>
</reference>
<reference key="9">
    <citation type="journal article" date="2006" name="Genes Cells">
        <title>Decreased basal mucus secretion by Slp2-a-deficient gastric surface mucous cells.</title>
        <authorList>
            <person name="Saegusa C."/>
            <person name="Tanaka T."/>
            <person name="Tani S."/>
            <person name="Itohara S."/>
            <person name="Mikoshiba K."/>
            <person name="Fukuda M."/>
        </authorList>
    </citation>
    <scope>TISSUE SPECIFICITY</scope>
    <scope>INTERACTION WITH SYTL2</scope>
</reference>
<reference key="10">
    <citation type="journal article" date="2008" name="J. Immunol.">
        <title>Doc2 alpha and Munc13-4 regulate Ca(2+) -dependent secretory lysosome exocytosis in mast cells.</title>
        <authorList>
            <person name="Higashio H."/>
            <person name="Nishimura N."/>
            <person name="Ishizaki H."/>
            <person name="Miyoshi J."/>
            <person name="Orita S."/>
            <person name="Sakane A."/>
            <person name="Sasaki T."/>
        </authorList>
    </citation>
    <scope>INTERACTION WITH UNC13D</scope>
</reference>
<reference key="11">
    <citation type="journal article" date="2008" name="Traffic">
        <title>Slp1 and Slp2-a localize to the plasma membrane of CTL and contribute to secretion from the immunological synapse.</title>
        <authorList>
            <person name="Holt O."/>
            <person name="Kanno E."/>
            <person name="Bossi G."/>
            <person name="Booth S."/>
            <person name="Daniele T."/>
            <person name="Santoro A."/>
            <person name="Arico M."/>
            <person name="Saegusa C."/>
            <person name="Fukuda M."/>
            <person name="Griffiths G.M."/>
        </authorList>
    </citation>
    <scope>INTERACTION WITH SYTL1 AND SYTL2</scope>
</reference>
<reference key="12">
    <citation type="journal article" date="2010" name="Cell">
        <title>A tissue-specific atlas of mouse protein phosphorylation and expression.</title>
        <authorList>
            <person name="Huttlin E.L."/>
            <person name="Jedrychowski M.P."/>
            <person name="Elias J.E."/>
            <person name="Goswami T."/>
            <person name="Rad R."/>
            <person name="Beausoleil S.A."/>
            <person name="Villen J."/>
            <person name="Haas W."/>
            <person name="Sowa M.E."/>
            <person name="Gygi S.P."/>
        </authorList>
    </citation>
    <scope>IDENTIFICATION BY MASS SPECTROMETRY [LARGE SCALE ANALYSIS]</scope>
    <source>
        <tissue>Lung</tissue>
        <tissue>Pancreas</tissue>
        <tissue>Spleen</tissue>
    </source>
</reference>
<reference key="13">
    <citation type="journal article" date="2008" name="Structure">
        <title>Elucidation of Rab27 recruitment by its effectors: structure of Rab27a bound to Exophilin4/Slp2-a.</title>
        <authorList>
            <person name="Chavas L.M."/>
            <person name="Ihara K."/>
            <person name="Kawasaki M."/>
            <person name="Torii S."/>
            <person name="Uejima T."/>
            <person name="Kato R."/>
            <person name="Izumi T."/>
            <person name="Wakatsuki S."/>
        </authorList>
    </citation>
    <scope>X-RAY CRYSTALLOGRAPHY (1.8 ANGSTROMS) OF 1-193 IN COMPLEX WITH GTP ANALOG</scope>
    <scope>INTERACTION WITH SYTL2</scope>
    <scope>MUTAGENESIS OF GLN-78</scope>
</reference>
<name>RB27A_MOUSE</name>
<dbReference type="EC" id="3.6.5.2" evidence="2"/>
<dbReference type="EMBL" id="AF304376">
    <property type="protein sequence ID" value="AAG24638.1"/>
    <property type="molecule type" value="mRNA"/>
</dbReference>
<dbReference type="EMBL" id="AB046693">
    <property type="protein sequence ID" value="BAB62313.1"/>
    <property type="molecule type" value="mRNA"/>
</dbReference>
<dbReference type="EMBL" id="AK010373">
    <property type="protein sequence ID" value="BAB26891.1"/>
    <property type="molecule type" value="mRNA"/>
</dbReference>
<dbReference type="EMBL" id="BC008173">
    <property type="protein sequence ID" value="AAH08173.1"/>
    <property type="molecule type" value="mRNA"/>
</dbReference>
<dbReference type="EMBL" id="BC009656">
    <property type="protein sequence ID" value="AAH09656.1"/>
    <property type="molecule type" value="mRNA"/>
</dbReference>
<dbReference type="CCDS" id="CCDS23335.1"/>
<dbReference type="RefSeq" id="NP_001288159.1">
    <property type="nucleotide sequence ID" value="NM_001301230.1"/>
</dbReference>
<dbReference type="RefSeq" id="NP_001288161.1">
    <property type="nucleotide sequence ID" value="NM_001301232.1"/>
</dbReference>
<dbReference type="RefSeq" id="NP_076124.1">
    <property type="nucleotide sequence ID" value="NM_023635.6"/>
</dbReference>
<dbReference type="RefSeq" id="XP_006510843.1">
    <property type="nucleotide sequence ID" value="XM_006510780.5"/>
</dbReference>
<dbReference type="PDB" id="3BC1">
    <property type="method" value="X-ray"/>
    <property type="resolution" value="1.80 A"/>
    <property type="chains" value="A/E=1-193"/>
</dbReference>
<dbReference type="PDBsum" id="3BC1"/>
<dbReference type="SMR" id="Q9ERI2"/>
<dbReference type="BioGRID" id="198222">
    <property type="interactions" value="8"/>
</dbReference>
<dbReference type="CORUM" id="Q9ERI2"/>
<dbReference type="DIP" id="DIP-31054N"/>
<dbReference type="FunCoup" id="Q9ERI2">
    <property type="interactions" value="1222"/>
</dbReference>
<dbReference type="IntAct" id="Q9ERI2">
    <property type="interactions" value="13"/>
</dbReference>
<dbReference type="STRING" id="10090.ENSMUSP00000139310"/>
<dbReference type="iPTMnet" id="Q9ERI2"/>
<dbReference type="PhosphoSitePlus" id="Q9ERI2"/>
<dbReference type="jPOST" id="Q9ERI2"/>
<dbReference type="PaxDb" id="10090-ENSMUSP00000034722"/>
<dbReference type="ProteomicsDB" id="300247"/>
<dbReference type="Pumba" id="Q9ERI2"/>
<dbReference type="Antibodypedia" id="687">
    <property type="antibodies" value="465 antibodies from 38 providers"/>
</dbReference>
<dbReference type="DNASU" id="11891"/>
<dbReference type="Ensembl" id="ENSMUST00000034722.5">
    <property type="protein sequence ID" value="ENSMUSP00000034722.4"/>
    <property type="gene ID" value="ENSMUSG00000032202.12"/>
</dbReference>
<dbReference type="Ensembl" id="ENSMUST00000184146.8">
    <property type="protein sequence ID" value="ENSMUSP00000139310.2"/>
    <property type="gene ID" value="ENSMUSG00000032202.12"/>
</dbReference>
<dbReference type="GeneID" id="11891"/>
<dbReference type="KEGG" id="mmu:11891"/>
<dbReference type="UCSC" id="uc009qqv.2">
    <property type="organism name" value="mouse"/>
</dbReference>
<dbReference type="AGR" id="MGI:1861441"/>
<dbReference type="CTD" id="5873"/>
<dbReference type="MGI" id="MGI:1861441">
    <property type="gene designation" value="Rab27a"/>
</dbReference>
<dbReference type="VEuPathDB" id="HostDB:ENSMUSG00000032202"/>
<dbReference type="eggNOG" id="KOG0081">
    <property type="taxonomic scope" value="Eukaryota"/>
</dbReference>
<dbReference type="GeneTree" id="ENSGT00940000156218"/>
<dbReference type="HOGENOM" id="CLU_041217_10_1_1"/>
<dbReference type="InParanoid" id="Q9ERI2"/>
<dbReference type="OMA" id="MHAYTED"/>
<dbReference type="OrthoDB" id="9989112at2759"/>
<dbReference type="PhylomeDB" id="Q9ERI2"/>
<dbReference type="TreeFam" id="TF312895"/>
<dbReference type="Reactome" id="R-MMU-6798695">
    <property type="pathway name" value="Neutrophil degranulation"/>
</dbReference>
<dbReference type="Reactome" id="R-MMU-8873719">
    <property type="pathway name" value="RAB geranylgeranylation"/>
</dbReference>
<dbReference type="Reactome" id="R-MMU-8876198">
    <property type="pathway name" value="RAB GEFs exchange GTP for GDP on RABs"/>
</dbReference>
<dbReference type="Reactome" id="R-MMU-9824585">
    <property type="pathway name" value="Regulation of MITF-M-dependent genes involved in pigmentation"/>
</dbReference>
<dbReference type="BioGRID-ORCS" id="11891">
    <property type="hits" value="1 hit in 79 CRISPR screens"/>
</dbReference>
<dbReference type="ChiTaRS" id="Rab27a">
    <property type="organism name" value="mouse"/>
</dbReference>
<dbReference type="EvolutionaryTrace" id="Q9ERI2"/>
<dbReference type="PRO" id="PR:Q9ERI2"/>
<dbReference type="Proteomes" id="UP000000589">
    <property type="component" value="Chromosome 9"/>
</dbReference>
<dbReference type="RNAct" id="Q9ERI2">
    <property type="molecule type" value="protein"/>
</dbReference>
<dbReference type="Bgee" id="ENSMUSG00000032202">
    <property type="expression patterns" value="Expressed in granulocyte and 210 other cell types or tissues"/>
</dbReference>
<dbReference type="ExpressionAtlas" id="Q9ERI2">
    <property type="expression patterns" value="baseline and differential"/>
</dbReference>
<dbReference type="GO" id="GO:0016324">
    <property type="term" value="C:apical plasma membrane"/>
    <property type="evidence" value="ECO:0007669"/>
    <property type="project" value="Ensembl"/>
</dbReference>
<dbReference type="GO" id="GO:0030425">
    <property type="term" value="C:dendrite"/>
    <property type="evidence" value="ECO:0007669"/>
    <property type="project" value="Ensembl"/>
</dbReference>
<dbReference type="GO" id="GO:0070382">
    <property type="term" value="C:exocytic vesicle"/>
    <property type="evidence" value="ECO:0007669"/>
    <property type="project" value="Ensembl"/>
</dbReference>
<dbReference type="GO" id="GO:0005794">
    <property type="term" value="C:Golgi apparatus"/>
    <property type="evidence" value="ECO:0000314"/>
    <property type="project" value="MGI"/>
</dbReference>
<dbReference type="GO" id="GO:0005770">
    <property type="term" value="C:late endosome"/>
    <property type="evidence" value="ECO:0000250"/>
    <property type="project" value="UniProtKB"/>
</dbReference>
<dbReference type="GO" id="GO:0005764">
    <property type="term" value="C:lysosome"/>
    <property type="evidence" value="ECO:0007669"/>
    <property type="project" value="UniProtKB-SubCell"/>
</dbReference>
<dbReference type="GO" id="GO:0042470">
    <property type="term" value="C:melanosome"/>
    <property type="evidence" value="ECO:0000314"/>
    <property type="project" value="UniProtKB"/>
</dbReference>
<dbReference type="GO" id="GO:0032585">
    <property type="term" value="C:multivesicular body membrane"/>
    <property type="evidence" value="ECO:0007669"/>
    <property type="project" value="Ensembl"/>
</dbReference>
<dbReference type="GO" id="GO:0001750">
    <property type="term" value="C:photoreceptor outer segment"/>
    <property type="evidence" value="ECO:0000314"/>
    <property type="project" value="UniProtKB"/>
</dbReference>
<dbReference type="GO" id="GO:0030141">
    <property type="term" value="C:secretory granule"/>
    <property type="evidence" value="ECO:0000315"/>
    <property type="project" value="MGI"/>
</dbReference>
<dbReference type="GO" id="GO:0033093">
    <property type="term" value="C:Weibel-Palade body"/>
    <property type="evidence" value="ECO:0007669"/>
    <property type="project" value="Ensembl"/>
</dbReference>
<dbReference type="GO" id="GO:0003925">
    <property type="term" value="F:G protein activity"/>
    <property type="evidence" value="ECO:0007669"/>
    <property type="project" value="UniProtKB-EC"/>
</dbReference>
<dbReference type="GO" id="GO:0019003">
    <property type="term" value="F:GDP binding"/>
    <property type="evidence" value="ECO:0000250"/>
    <property type="project" value="UniProtKB"/>
</dbReference>
<dbReference type="GO" id="GO:0005525">
    <property type="term" value="F:GTP binding"/>
    <property type="evidence" value="ECO:0000314"/>
    <property type="project" value="UniProtKB"/>
</dbReference>
<dbReference type="GO" id="GO:0003924">
    <property type="term" value="F:GTPase activity"/>
    <property type="evidence" value="ECO:0000314"/>
    <property type="project" value="UniProtKB"/>
</dbReference>
<dbReference type="GO" id="GO:0031489">
    <property type="term" value="F:myosin V binding"/>
    <property type="evidence" value="ECO:0000353"/>
    <property type="project" value="MGI"/>
</dbReference>
<dbReference type="GO" id="GO:0019904">
    <property type="term" value="F:protein domain specific binding"/>
    <property type="evidence" value="ECO:0007669"/>
    <property type="project" value="Ensembl"/>
</dbReference>
<dbReference type="GO" id="GO:0019882">
    <property type="term" value="P:antigen processing and presentation"/>
    <property type="evidence" value="ECO:0007669"/>
    <property type="project" value="Ensembl"/>
</dbReference>
<dbReference type="GO" id="GO:0007596">
    <property type="term" value="P:blood coagulation"/>
    <property type="evidence" value="ECO:0000315"/>
    <property type="project" value="MGI"/>
</dbReference>
<dbReference type="GO" id="GO:0097278">
    <property type="term" value="P:complement-dependent cytotoxicity"/>
    <property type="evidence" value="ECO:0007669"/>
    <property type="project" value="Ensembl"/>
</dbReference>
<dbReference type="GO" id="GO:0043316">
    <property type="term" value="P:cytotoxic T cell degranulation"/>
    <property type="evidence" value="ECO:0000315"/>
    <property type="project" value="MGI"/>
</dbReference>
<dbReference type="GO" id="GO:1990182">
    <property type="term" value="P:exosomal secretion"/>
    <property type="evidence" value="ECO:0007669"/>
    <property type="project" value="Ensembl"/>
</dbReference>
<dbReference type="GO" id="GO:0030318">
    <property type="term" value="P:melanocyte differentiation"/>
    <property type="evidence" value="ECO:0000315"/>
    <property type="project" value="MGI"/>
</dbReference>
<dbReference type="GO" id="GO:0032402">
    <property type="term" value="P:melanosome transport"/>
    <property type="evidence" value="ECO:0000315"/>
    <property type="project" value="MGI"/>
</dbReference>
<dbReference type="GO" id="GO:0036257">
    <property type="term" value="P:multivesicular body organization"/>
    <property type="evidence" value="ECO:0007669"/>
    <property type="project" value="Ensembl"/>
</dbReference>
<dbReference type="GO" id="GO:0071985">
    <property type="term" value="P:multivesicular body sorting pathway"/>
    <property type="evidence" value="ECO:0007669"/>
    <property type="project" value="Ensembl"/>
</dbReference>
<dbReference type="GO" id="GO:0043320">
    <property type="term" value="P:natural killer cell degranulation"/>
    <property type="evidence" value="ECO:0000315"/>
    <property type="project" value="MGI"/>
</dbReference>
<dbReference type="GO" id="GO:0051875">
    <property type="term" value="P:pigment granule localization"/>
    <property type="evidence" value="ECO:0000315"/>
    <property type="project" value="MGI"/>
</dbReference>
<dbReference type="GO" id="GO:0051904">
    <property type="term" value="P:pigment granule transport"/>
    <property type="evidence" value="ECO:0000315"/>
    <property type="project" value="MGI"/>
</dbReference>
<dbReference type="GO" id="GO:0043473">
    <property type="term" value="P:pigmentation"/>
    <property type="evidence" value="ECO:0000315"/>
    <property type="project" value="MGI"/>
</dbReference>
<dbReference type="GO" id="GO:1903435">
    <property type="term" value="P:positive regulation of constitutive secretory pathway"/>
    <property type="evidence" value="ECO:0007669"/>
    <property type="project" value="Ensembl"/>
</dbReference>
<dbReference type="GO" id="GO:0010628">
    <property type="term" value="P:positive regulation of gene expression"/>
    <property type="evidence" value="ECO:0007669"/>
    <property type="project" value="Ensembl"/>
</dbReference>
<dbReference type="GO" id="GO:0050766">
    <property type="term" value="P:positive regulation of phagocytosis"/>
    <property type="evidence" value="ECO:0007669"/>
    <property type="project" value="Ensembl"/>
</dbReference>
<dbReference type="GO" id="GO:1903428">
    <property type="term" value="P:positive regulation of reactive oxygen species biosynthetic process"/>
    <property type="evidence" value="ECO:0007669"/>
    <property type="project" value="Ensembl"/>
</dbReference>
<dbReference type="GO" id="GO:1903307">
    <property type="term" value="P:positive regulation of regulated secretory pathway"/>
    <property type="evidence" value="ECO:0007669"/>
    <property type="project" value="Ensembl"/>
</dbReference>
<dbReference type="GO" id="GO:0009306">
    <property type="term" value="P:protein secretion"/>
    <property type="evidence" value="ECO:0000315"/>
    <property type="project" value="MGI"/>
</dbReference>
<dbReference type="GO" id="GO:0016192">
    <property type="term" value="P:vesicle-mediated transport"/>
    <property type="evidence" value="ECO:0000315"/>
    <property type="project" value="MGI"/>
</dbReference>
<dbReference type="CDD" id="cd04127">
    <property type="entry name" value="Rab27A"/>
    <property type="match status" value="1"/>
</dbReference>
<dbReference type="FunFam" id="3.40.50.300:FF:000402">
    <property type="entry name" value="Ras-related protein Rab-27A"/>
    <property type="match status" value="1"/>
</dbReference>
<dbReference type="Gene3D" id="3.40.50.300">
    <property type="entry name" value="P-loop containing nucleotide triphosphate hydrolases"/>
    <property type="match status" value="1"/>
</dbReference>
<dbReference type="InterPro" id="IPR027417">
    <property type="entry name" value="P-loop_NTPase"/>
</dbReference>
<dbReference type="InterPro" id="IPR041837">
    <property type="entry name" value="Rab27a/b"/>
</dbReference>
<dbReference type="InterPro" id="IPR005225">
    <property type="entry name" value="Small_GTP-bd"/>
</dbReference>
<dbReference type="InterPro" id="IPR001806">
    <property type="entry name" value="Small_GTPase"/>
</dbReference>
<dbReference type="InterPro" id="IPR050305">
    <property type="entry name" value="Small_GTPase_Rab"/>
</dbReference>
<dbReference type="NCBIfam" id="TIGR00231">
    <property type="entry name" value="small_GTP"/>
    <property type="match status" value="1"/>
</dbReference>
<dbReference type="PANTHER" id="PTHR47980">
    <property type="entry name" value="LD44762P"/>
    <property type="match status" value="1"/>
</dbReference>
<dbReference type="Pfam" id="PF00071">
    <property type="entry name" value="Ras"/>
    <property type="match status" value="1"/>
</dbReference>
<dbReference type="PRINTS" id="PR00449">
    <property type="entry name" value="RASTRNSFRMNG"/>
</dbReference>
<dbReference type="SMART" id="SM00175">
    <property type="entry name" value="RAB"/>
    <property type="match status" value="1"/>
</dbReference>
<dbReference type="SMART" id="SM00176">
    <property type="entry name" value="RAN"/>
    <property type="match status" value="1"/>
</dbReference>
<dbReference type="SMART" id="SM00173">
    <property type="entry name" value="RAS"/>
    <property type="match status" value="1"/>
</dbReference>
<dbReference type="SMART" id="SM00174">
    <property type="entry name" value="RHO"/>
    <property type="match status" value="1"/>
</dbReference>
<dbReference type="SUPFAM" id="SSF52540">
    <property type="entry name" value="P-loop containing nucleoside triphosphate hydrolases"/>
    <property type="match status" value="1"/>
</dbReference>
<dbReference type="PROSITE" id="PS51419">
    <property type="entry name" value="RAB"/>
    <property type="match status" value="1"/>
</dbReference>
<sequence>MSDGDYDYLIKFLALGDSGVGKTSVLYQYTDGKFNSKFITTVGIDFREKRVVYRANGPDGAVGRGQRIHLQLWDTAGQERFRSLTTAFFRDAMGFLLLFDLTNEQSFLNVRNWISQLQMHAYCENPDIVLCGNKSDLEDQRAVKEEEARELAEKYGIPYFETSAANGTNISHAIEMLLDLIMKRMERCVDKSWIPEGVVRSNGHTSADQLSEEKEKGLCGC</sequence>
<comment type="function">
    <text evidence="2">Small GTPase which cycles between active GTP-bound and inactive GDP-bound states. In its active state, binds to a variety of effector proteins to regulate homeostasis of late endocytic pathway, including endosomal positioning, maturation and secretion. Plays a role in cytotoxic granule exocytosis in lymphocytes. Required for both granule maturation and granule docking and priming at the immunologic synapse.</text>
</comment>
<comment type="catalytic activity">
    <reaction evidence="2">
        <text>GTP + H2O = GDP + phosphate + H(+)</text>
        <dbReference type="Rhea" id="RHEA:19669"/>
        <dbReference type="ChEBI" id="CHEBI:15377"/>
        <dbReference type="ChEBI" id="CHEBI:15378"/>
        <dbReference type="ChEBI" id="CHEBI:37565"/>
        <dbReference type="ChEBI" id="CHEBI:43474"/>
        <dbReference type="ChEBI" id="CHEBI:58189"/>
        <dbReference type="EC" id="3.6.5.2"/>
    </reaction>
    <physiologicalReaction direction="left-to-right" evidence="2">
        <dbReference type="Rhea" id="RHEA:19670"/>
    </physiologicalReaction>
</comment>
<comment type="activity regulation">
    <text evidence="2">Regulated by guanine nucleotide exchange factors (GEFs) which promote the exchange of bound GDP for free GTP, GTPase activating proteins (GAPs) which increase the GTP hydrolysis activity, and GDP dissociation inhibitors which inhibit the dissociation of the nucleotide from the GTPase. Activated by GEFs such as DENND10.</text>
</comment>
<comment type="subunit">
    <text evidence="2 3 4 5 6 7 8 9 10">Binds SYTL1, SYTL2, SLAC2B, MYRIP, SYTL3, SYTL4, SYTL5 and MLPH. Interacts with UNC13D. Interacts with RPH3A and RPH3A. Does not interact with the BLOC-3 complex (heterodimer of HPS1 and HPS4) (By similarity). Interacts (GDP-bound form preferentially) with DENND10 (By similarity).</text>
</comment>
<comment type="interaction">
    <interactant intactId="EBI-398172">
        <id>Q9ERI2</id>
    </interactant>
    <interactant intactId="EBI-398308">
        <id>Q91V27</id>
        <label>Mlph</label>
    </interactant>
    <organismsDiffer>false</organismsDiffer>
    <experiments>2</experiments>
</comment>
<comment type="interaction">
    <interactant intactId="EBI-398172">
        <id>Q9ERI2</id>
    </interactant>
    <interactant intactId="EBI-398376">
        <id>P47708</id>
        <label>Rph3a</label>
    </interactant>
    <organismsDiffer>false</organismsDiffer>
    <experiments>2</experiments>
</comment>
<comment type="interaction">
    <interactant intactId="EBI-398172">
        <id>Q9ERI2</id>
    </interactant>
    <interactant intactId="EBI-15734647">
        <id>Q9R0Q1-1</id>
        <label>Sytl4</label>
    </interactant>
    <organismsDiffer>false</organismsDiffer>
    <experiments>2</experiments>
</comment>
<comment type="interaction">
    <interactant intactId="EBI-398172">
        <id>Q9ERI2</id>
    </interactant>
    <interactant intactId="EBI-2690103">
        <id>Q9HCH5</id>
        <label>SYTL2</label>
    </interactant>
    <organismsDiffer>true</organismsDiffer>
    <experiments>4</experiments>
</comment>
<comment type="interaction">
    <interactant intactId="EBI-398172">
        <id>Q9ERI2</id>
    </interactant>
    <interactant intactId="EBI-2939487">
        <id>Q8TDW5</id>
        <label>SYTL5</label>
    </interactant>
    <organismsDiffer>true</organismsDiffer>
    <experiments>2</experiments>
</comment>
<comment type="subcellular location">
    <subcellularLocation>
        <location evidence="2">Membrane</location>
        <topology evidence="2">Lipid-anchor</topology>
    </subcellularLocation>
    <subcellularLocation>
        <location evidence="2">Melanosome</location>
    </subcellularLocation>
    <subcellularLocation>
        <location evidence="2">Late endosome</location>
    </subcellularLocation>
    <subcellularLocation>
        <location evidence="2">Lysosome</location>
    </subcellularLocation>
    <text evidence="2">Identified by mass spectrometry in melanosome fractions from stage I to stage IV. Localizes to endosomal exocytic vesicles.</text>
</comment>
<comment type="tissue specificity">
    <text evidence="7">Detected in melanocytes. Expressed abundantly in the stomach and is predominantly localized at the apical region of gastric-surface mucus cells. Also expressed in the thymus and lung.</text>
</comment>
<comment type="similarity">
    <text evidence="11">Belongs to the small GTPase superfamily. Rab family.</text>
</comment>
<protein>
    <recommendedName>
        <fullName>Ras-related protein Rab-27A</fullName>
        <ecNumber evidence="2">3.6.5.2</ecNumber>
    </recommendedName>
</protein>
<gene>
    <name type="primary">Rab27a</name>
</gene>
<feature type="initiator methionine" description="Removed" evidence="2">
    <location>
        <position position="1"/>
    </location>
</feature>
<feature type="chain" id="PRO_0000121222" description="Ras-related protein Rab-27A">
    <location>
        <begin position="2"/>
        <end position="221"/>
    </location>
</feature>
<feature type="short sequence motif" description="Effector region" evidence="1">
    <location>
        <begin position="38"/>
        <end position="46"/>
    </location>
</feature>
<feature type="binding site">
    <location>
        <begin position="16"/>
        <end position="24"/>
    </location>
    <ligand>
        <name>GTP</name>
        <dbReference type="ChEBI" id="CHEBI:37565"/>
    </ligand>
</feature>
<feature type="binding site">
    <location>
        <begin position="74"/>
        <end position="78"/>
    </location>
    <ligand>
        <name>GTP</name>
        <dbReference type="ChEBI" id="CHEBI:37565"/>
    </ligand>
</feature>
<feature type="binding site">
    <location>
        <begin position="133"/>
        <end position="136"/>
    </location>
    <ligand>
        <name>GTP</name>
        <dbReference type="ChEBI" id="CHEBI:37565"/>
    </ligand>
</feature>
<feature type="binding site">
    <location>
        <begin position="163"/>
        <end position="165"/>
    </location>
    <ligand>
        <name>GTP</name>
        <dbReference type="ChEBI" id="CHEBI:37565"/>
    </ligand>
</feature>
<feature type="modified residue" description="N-acetylserine" evidence="2">
    <location>
        <position position="2"/>
    </location>
</feature>
<feature type="modified residue" description="Phosphoserine" evidence="2">
    <location>
        <position position="2"/>
    </location>
</feature>
<feature type="modified residue" description="Cysteine methyl ester" evidence="1">
    <location>
        <position position="221"/>
    </location>
</feature>
<feature type="lipid moiety-binding region" description="S-geranylgeranyl cysteine" evidence="1">
    <location>
        <position position="219"/>
    </location>
</feature>
<feature type="lipid moiety-binding region" description="S-geranylgeranyl cysteine" evidence="1">
    <location>
        <position position="221"/>
    </location>
</feature>
<feature type="disulfide bond" evidence="1">
    <location>
        <begin position="123"/>
        <end position="188"/>
    </location>
</feature>
<feature type="mutagenesis site" description="Loss of GTPase activity." evidence="10">
    <original>Q</original>
    <variation>L</variation>
    <location>
        <position position="78"/>
    </location>
</feature>
<feature type="strand" evidence="12">
    <location>
        <begin position="7"/>
        <end position="15"/>
    </location>
</feature>
<feature type="helix" evidence="12">
    <location>
        <begin position="22"/>
        <end position="31"/>
    </location>
</feature>
<feature type="strand" evidence="12">
    <location>
        <begin position="43"/>
        <end position="53"/>
    </location>
</feature>
<feature type="strand" evidence="12">
    <location>
        <begin position="66"/>
        <end position="75"/>
    </location>
</feature>
<feature type="helix" evidence="12">
    <location>
        <begin position="79"/>
        <end position="81"/>
    </location>
</feature>
<feature type="helix" evidence="12">
    <location>
        <begin position="82"/>
        <end position="87"/>
    </location>
</feature>
<feature type="turn" evidence="12">
    <location>
        <begin position="88"/>
        <end position="91"/>
    </location>
</feature>
<feature type="strand" evidence="12">
    <location>
        <begin position="93"/>
        <end position="100"/>
    </location>
</feature>
<feature type="helix" evidence="12">
    <location>
        <begin position="104"/>
        <end position="108"/>
    </location>
</feature>
<feature type="helix" evidence="12">
    <location>
        <begin position="110"/>
        <end position="120"/>
    </location>
</feature>
<feature type="strand" evidence="12">
    <location>
        <begin position="121"/>
        <end position="125"/>
    </location>
</feature>
<feature type="strand" evidence="12">
    <location>
        <begin position="128"/>
        <end position="133"/>
    </location>
</feature>
<feature type="helix" evidence="12">
    <location>
        <begin position="138"/>
        <end position="140"/>
    </location>
</feature>
<feature type="helix" evidence="12">
    <location>
        <begin position="145"/>
        <end position="155"/>
    </location>
</feature>
<feature type="strand" evidence="12">
    <location>
        <begin position="159"/>
        <end position="161"/>
    </location>
</feature>
<feature type="turn" evidence="12">
    <location>
        <begin position="164"/>
        <end position="166"/>
    </location>
</feature>
<feature type="helix" evidence="12">
    <location>
        <begin position="170"/>
        <end position="187"/>
    </location>
</feature>
<evidence type="ECO:0000250" key="1"/>
<evidence type="ECO:0000250" key="2">
    <source>
        <dbReference type="UniProtKB" id="P51159"/>
    </source>
</evidence>
<evidence type="ECO:0000269" key="3">
    <source>
    </source>
</evidence>
<evidence type="ECO:0000269" key="4">
    <source>
    </source>
</evidence>
<evidence type="ECO:0000269" key="5">
    <source>
    </source>
</evidence>
<evidence type="ECO:0000269" key="6">
    <source>
    </source>
</evidence>
<evidence type="ECO:0000269" key="7">
    <source>
    </source>
</evidence>
<evidence type="ECO:0000269" key="8">
    <source>
    </source>
</evidence>
<evidence type="ECO:0000269" key="9">
    <source>
    </source>
</evidence>
<evidence type="ECO:0000269" key="10">
    <source>
    </source>
</evidence>
<evidence type="ECO:0000305" key="11"/>
<evidence type="ECO:0007829" key="12">
    <source>
        <dbReference type="PDB" id="3BC1"/>
    </source>
</evidence>
<proteinExistence type="evidence at protein level"/>
<keyword id="KW-0002">3D-structure</keyword>
<keyword id="KW-0007">Acetylation</keyword>
<keyword id="KW-1015">Disulfide bond</keyword>
<keyword id="KW-0967">Endosome</keyword>
<keyword id="KW-0268">Exocytosis</keyword>
<keyword id="KW-0342">GTP-binding</keyword>
<keyword id="KW-0378">Hydrolase</keyword>
<keyword id="KW-0449">Lipoprotein</keyword>
<keyword id="KW-0458">Lysosome</keyword>
<keyword id="KW-0472">Membrane</keyword>
<keyword id="KW-0488">Methylation</keyword>
<keyword id="KW-0547">Nucleotide-binding</keyword>
<keyword id="KW-0597">Phosphoprotein</keyword>
<keyword id="KW-0636">Prenylation</keyword>
<keyword id="KW-1185">Reference proteome</keyword>
<organism>
    <name type="scientific">Mus musculus</name>
    <name type="common">Mouse</name>
    <dbReference type="NCBI Taxonomy" id="10090"/>
    <lineage>
        <taxon>Eukaryota</taxon>
        <taxon>Metazoa</taxon>
        <taxon>Chordata</taxon>
        <taxon>Craniata</taxon>
        <taxon>Vertebrata</taxon>
        <taxon>Euteleostomi</taxon>
        <taxon>Mammalia</taxon>
        <taxon>Eutheria</taxon>
        <taxon>Euarchontoglires</taxon>
        <taxon>Glires</taxon>
        <taxon>Rodentia</taxon>
        <taxon>Myomorpha</taxon>
        <taxon>Muroidea</taxon>
        <taxon>Muridae</taxon>
        <taxon>Murinae</taxon>
        <taxon>Mus</taxon>
        <taxon>Mus</taxon>
    </lineage>
</organism>